<keyword id="KW-0032">Aminotransferase</keyword>
<keyword id="KW-0808">Transferase</keyword>
<accession>A0L105</accession>
<dbReference type="EC" id="2.1.2.10" evidence="1"/>
<dbReference type="EMBL" id="CP000469">
    <property type="protein sequence ID" value="ABK49724.1"/>
    <property type="molecule type" value="Genomic_DNA"/>
</dbReference>
<dbReference type="RefSeq" id="WP_011718288.1">
    <property type="nucleotide sequence ID" value="NC_008577.1"/>
</dbReference>
<dbReference type="SMR" id="A0L105"/>
<dbReference type="STRING" id="94122.Shewana3_3501"/>
<dbReference type="KEGG" id="shn:Shewana3_3501"/>
<dbReference type="eggNOG" id="COG0404">
    <property type="taxonomic scope" value="Bacteria"/>
</dbReference>
<dbReference type="HOGENOM" id="CLU_007884_10_2_6"/>
<dbReference type="OrthoDB" id="9774591at2"/>
<dbReference type="Proteomes" id="UP000002589">
    <property type="component" value="Chromosome"/>
</dbReference>
<dbReference type="GO" id="GO:0005829">
    <property type="term" value="C:cytosol"/>
    <property type="evidence" value="ECO:0007669"/>
    <property type="project" value="TreeGrafter"/>
</dbReference>
<dbReference type="GO" id="GO:0005960">
    <property type="term" value="C:glycine cleavage complex"/>
    <property type="evidence" value="ECO:0007669"/>
    <property type="project" value="InterPro"/>
</dbReference>
<dbReference type="GO" id="GO:0004047">
    <property type="term" value="F:aminomethyltransferase activity"/>
    <property type="evidence" value="ECO:0007669"/>
    <property type="project" value="UniProtKB-UniRule"/>
</dbReference>
<dbReference type="GO" id="GO:0008483">
    <property type="term" value="F:transaminase activity"/>
    <property type="evidence" value="ECO:0007669"/>
    <property type="project" value="UniProtKB-KW"/>
</dbReference>
<dbReference type="GO" id="GO:0019464">
    <property type="term" value="P:glycine decarboxylation via glycine cleavage system"/>
    <property type="evidence" value="ECO:0007669"/>
    <property type="project" value="UniProtKB-UniRule"/>
</dbReference>
<dbReference type="FunFam" id="2.40.30.110:FF:000001">
    <property type="entry name" value="Aminomethyltransferase"/>
    <property type="match status" value="1"/>
</dbReference>
<dbReference type="FunFam" id="3.30.70.1400:FF:000001">
    <property type="entry name" value="Aminomethyltransferase"/>
    <property type="match status" value="1"/>
</dbReference>
<dbReference type="FunFam" id="4.10.1250.10:FF:000001">
    <property type="entry name" value="Aminomethyltransferase"/>
    <property type="match status" value="1"/>
</dbReference>
<dbReference type="Gene3D" id="2.40.30.110">
    <property type="entry name" value="Aminomethyltransferase beta-barrel domains"/>
    <property type="match status" value="1"/>
</dbReference>
<dbReference type="Gene3D" id="3.30.70.1400">
    <property type="entry name" value="Aminomethyltransferase beta-barrel domains"/>
    <property type="match status" value="1"/>
</dbReference>
<dbReference type="Gene3D" id="4.10.1250.10">
    <property type="entry name" value="Aminomethyltransferase fragment"/>
    <property type="match status" value="1"/>
</dbReference>
<dbReference type="Gene3D" id="3.30.1360.120">
    <property type="entry name" value="Probable tRNA modification gtpase trme, domain 1"/>
    <property type="match status" value="1"/>
</dbReference>
<dbReference type="HAMAP" id="MF_00259">
    <property type="entry name" value="GcvT"/>
    <property type="match status" value="1"/>
</dbReference>
<dbReference type="InterPro" id="IPR006223">
    <property type="entry name" value="GCS_T"/>
</dbReference>
<dbReference type="InterPro" id="IPR022903">
    <property type="entry name" value="GCS_T_bac"/>
</dbReference>
<dbReference type="InterPro" id="IPR013977">
    <property type="entry name" value="GCST_C"/>
</dbReference>
<dbReference type="InterPro" id="IPR006222">
    <property type="entry name" value="GCV_T_N"/>
</dbReference>
<dbReference type="InterPro" id="IPR028896">
    <property type="entry name" value="GcvT/YgfZ/DmdA"/>
</dbReference>
<dbReference type="InterPro" id="IPR029043">
    <property type="entry name" value="GcvT/YgfZ_C"/>
</dbReference>
<dbReference type="InterPro" id="IPR027266">
    <property type="entry name" value="TrmE/GcvT_dom1"/>
</dbReference>
<dbReference type="NCBIfam" id="TIGR00528">
    <property type="entry name" value="gcvT"/>
    <property type="match status" value="1"/>
</dbReference>
<dbReference type="NCBIfam" id="NF001567">
    <property type="entry name" value="PRK00389.1"/>
    <property type="match status" value="1"/>
</dbReference>
<dbReference type="PANTHER" id="PTHR43757">
    <property type="entry name" value="AMINOMETHYLTRANSFERASE"/>
    <property type="match status" value="1"/>
</dbReference>
<dbReference type="PANTHER" id="PTHR43757:SF2">
    <property type="entry name" value="AMINOMETHYLTRANSFERASE, MITOCHONDRIAL"/>
    <property type="match status" value="1"/>
</dbReference>
<dbReference type="Pfam" id="PF01571">
    <property type="entry name" value="GCV_T"/>
    <property type="match status" value="1"/>
</dbReference>
<dbReference type="Pfam" id="PF08669">
    <property type="entry name" value="GCV_T_C"/>
    <property type="match status" value="1"/>
</dbReference>
<dbReference type="PIRSF" id="PIRSF006487">
    <property type="entry name" value="GcvT"/>
    <property type="match status" value="1"/>
</dbReference>
<dbReference type="SUPFAM" id="SSF101790">
    <property type="entry name" value="Aminomethyltransferase beta-barrel domain"/>
    <property type="match status" value="1"/>
</dbReference>
<dbReference type="SUPFAM" id="SSF103025">
    <property type="entry name" value="Folate-binding domain"/>
    <property type="match status" value="1"/>
</dbReference>
<name>GCST_SHESA</name>
<evidence type="ECO:0000255" key="1">
    <source>
        <dbReference type="HAMAP-Rule" id="MF_00259"/>
    </source>
</evidence>
<comment type="function">
    <text evidence="1">The glycine cleavage system catalyzes the degradation of glycine.</text>
</comment>
<comment type="catalytic activity">
    <reaction evidence="1">
        <text>N(6)-[(R)-S(8)-aminomethyldihydrolipoyl]-L-lysyl-[protein] + (6S)-5,6,7,8-tetrahydrofolate = N(6)-[(R)-dihydrolipoyl]-L-lysyl-[protein] + (6R)-5,10-methylene-5,6,7,8-tetrahydrofolate + NH4(+)</text>
        <dbReference type="Rhea" id="RHEA:16945"/>
        <dbReference type="Rhea" id="RHEA-COMP:10475"/>
        <dbReference type="Rhea" id="RHEA-COMP:10492"/>
        <dbReference type="ChEBI" id="CHEBI:15636"/>
        <dbReference type="ChEBI" id="CHEBI:28938"/>
        <dbReference type="ChEBI" id="CHEBI:57453"/>
        <dbReference type="ChEBI" id="CHEBI:83100"/>
        <dbReference type="ChEBI" id="CHEBI:83143"/>
        <dbReference type="EC" id="2.1.2.10"/>
    </reaction>
</comment>
<comment type="subunit">
    <text evidence="1">The glycine cleavage system is composed of four proteins: P, T, L and H.</text>
</comment>
<comment type="similarity">
    <text evidence="1">Belongs to the GcvT family.</text>
</comment>
<organism>
    <name type="scientific">Shewanella sp. (strain ANA-3)</name>
    <dbReference type="NCBI Taxonomy" id="94122"/>
    <lineage>
        <taxon>Bacteria</taxon>
        <taxon>Pseudomonadati</taxon>
        <taxon>Pseudomonadota</taxon>
        <taxon>Gammaproteobacteria</taxon>
        <taxon>Alteromonadales</taxon>
        <taxon>Shewanellaceae</taxon>
        <taxon>Shewanella</taxon>
    </lineage>
</organism>
<protein>
    <recommendedName>
        <fullName evidence="1">Aminomethyltransferase</fullName>
        <ecNumber evidence="1">2.1.2.10</ecNumber>
    </recommendedName>
    <alternativeName>
        <fullName evidence="1">Glycine cleavage system T protein</fullName>
    </alternativeName>
</protein>
<reference key="1">
    <citation type="submission" date="2006-09" db="EMBL/GenBank/DDBJ databases">
        <title>Complete sequence of chromosome 1 of Shewanella sp. ANA-3.</title>
        <authorList>
            <person name="Copeland A."/>
            <person name="Lucas S."/>
            <person name="Lapidus A."/>
            <person name="Barry K."/>
            <person name="Detter J.C."/>
            <person name="Glavina del Rio T."/>
            <person name="Hammon N."/>
            <person name="Israni S."/>
            <person name="Dalin E."/>
            <person name="Tice H."/>
            <person name="Pitluck S."/>
            <person name="Chertkov O."/>
            <person name="Brettin T."/>
            <person name="Bruce D."/>
            <person name="Han C."/>
            <person name="Tapia R."/>
            <person name="Gilna P."/>
            <person name="Schmutz J."/>
            <person name="Larimer F."/>
            <person name="Land M."/>
            <person name="Hauser L."/>
            <person name="Kyrpides N."/>
            <person name="Kim E."/>
            <person name="Newman D."/>
            <person name="Salticov C."/>
            <person name="Konstantinidis K."/>
            <person name="Klappenback J."/>
            <person name="Tiedje J."/>
            <person name="Richardson P."/>
        </authorList>
    </citation>
    <scope>NUCLEOTIDE SEQUENCE [LARGE SCALE GENOMIC DNA]</scope>
    <source>
        <strain>ANA-3</strain>
    </source>
</reference>
<feature type="chain" id="PRO_1000047704" description="Aminomethyltransferase">
    <location>
        <begin position="1"/>
        <end position="364"/>
    </location>
</feature>
<sequence>MANKTVLFNKHLESNAKMVDFHGWDMPLNYGSQIEEHHAVRQDAGMFDVSHMTVVDVTGTDACAFLRKLLANDVAKLKVPGKALYGGMLDDNAGIIDDLITYYLTDTFYRVVVNSATREKDLAWIAKQSQGFDVTVTERPELAMIAVQGPNAKAKAAAVFSADQNAAIEGMKPFFGKQAGSLFIATTGYTGEVGYEIIVPETEAEALWQALLDQGVKPCGLGARDTLRLEAGMNLYGLDMDETINPLAANMGWTIAWEPTDRDFIGRQALEALRDAGTDKLVGLVMEEKGVLRHDMPVFFTDAAGVEQQGVITSGTFSPTLGYSIAMARVPNSIGDTAEVEMRKKRVAVRVVAPNFVRNGKQAF</sequence>
<proteinExistence type="inferred from homology"/>
<gene>
    <name evidence="1" type="primary">gcvT</name>
    <name type="ordered locus">Shewana3_3501</name>
</gene>